<accession>R4J7Z9</accession>
<feature type="signal peptide" evidence="2">
    <location>
        <begin position="1"/>
        <end position="19"/>
    </location>
</feature>
<feature type="chain" id="PRO_0000425845" description="Hyaluronidase">
    <location>
        <begin position="20"/>
        <end position="400"/>
    </location>
</feature>
<feature type="domain" description="EGF-like">
    <location>
        <begin position="340"/>
        <end position="396"/>
    </location>
</feature>
<feature type="active site" description="Proton donor" evidence="1">
    <location>
        <position position="120"/>
    </location>
</feature>
<feature type="glycosylation site" description="N-linked (GlcNAc...) asparagine" evidence="2">
    <location>
        <position position="129"/>
    </location>
</feature>
<feature type="glycosylation site" description="N-linked (GlcNAc...) asparagine" evidence="2">
    <location>
        <position position="166"/>
    </location>
</feature>
<feature type="glycosylation site" description="N-linked (GlcNAc...) asparagine" evidence="2">
    <location>
        <position position="243"/>
    </location>
</feature>
<feature type="glycosylation site" description="N-linked (GlcNAc...) asparagine" evidence="2">
    <location>
        <position position="275"/>
    </location>
</feature>
<feature type="disulfide bond" evidence="1">
    <location>
        <begin position="31"/>
        <end position="319"/>
    </location>
</feature>
<feature type="disulfide bond" evidence="1">
    <location>
        <begin position="196"/>
        <end position="209"/>
    </location>
</feature>
<feature type="disulfide bond" evidence="1">
    <location>
        <begin position="344"/>
        <end position="355"/>
    </location>
</feature>
<feature type="disulfide bond" evidence="1">
    <location>
        <begin position="349"/>
        <end position="384"/>
    </location>
</feature>
<feature type="disulfide bond" evidence="1">
    <location>
        <begin position="386"/>
        <end position="395"/>
    </location>
</feature>
<name>HYAL_LOXIN</name>
<proteinExistence type="evidence at transcript level"/>
<protein>
    <recommendedName>
        <fullName>Hyaluronidase</fullName>
        <ecNumber>3.2.1.35</ecNumber>
    </recommendedName>
    <alternativeName>
        <fullName>Chondroitinase</fullName>
    </alternativeName>
    <alternativeName>
        <fullName>Dietrich's hyaluronidase</fullName>
    </alternativeName>
    <alternativeName>
        <fullName>Hyaluronoglucosaminidase</fullName>
    </alternativeName>
    <alternativeName>
        <fullName>Spreading factor</fullName>
    </alternativeName>
</protein>
<reference key="1">
    <citation type="journal article" date="2013" name="PLoS Negl. Trop. Dis.">
        <title>A novel hyaluronidase from brown spider (Loxosceles intermedia) venom (Dietrich's Hyaluronidase): from cloning to functional characterization.</title>
        <authorList>
            <person name="Ferrer V.P."/>
            <person name="de Mari T.L."/>
            <person name="Gremski L.H."/>
            <person name="Trevisan Silva D."/>
            <person name="da Silveira R.B."/>
            <person name="Gremski W."/>
            <person name="Chaim O.M."/>
            <person name="Senff-Ribeiro A."/>
            <person name="Nader H.B."/>
            <person name="Veiga S.S."/>
        </authorList>
    </citation>
    <scope>NUCLEOTIDE SEQUENCE [MRNA]</scope>
    <scope>FUNCTION</scope>
    <scope>BIOASSAY</scope>
    <source>
        <tissue>Venom gland</tissue>
    </source>
</reference>
<reference key="2">
    <citation type="journal article" date="2007" name="Toxicon">
        <title>Hyaluronidases in Loxosceles intermedia (Brown spider) venom are endo-beta-N-acetyl-d-hexosaminidases hydrolases.</title>
        <authorList>
            <person name="da Silveira R.B."/>
            <person name="Chaim O.M."/>
            <person name="Mangili O.C."/>
            <person name="Gremski W."/>
            <person name="Dietrich C.P."/>
            <person name="Nader H.B."/>
            <person name="Veiga S.S."/>
        </authorList>
    </citation>
    <scope>FUNCTION</scope>
    <scope>SUBCELLULAR LOCATION</scope>
    <scope>TISSUE SPECIFICITY</scope>
    <source>
        <tissue>Venom</tissue>
    </source>
</reference>
<organism>
    <name type="scientific">Loxosceles intermedia</name>
    <name type="common">Brown spider</name>
    <dbReference type="NCBI Taxonomy" id="58218"/>
    <lineage>
        <taxon>Eukaryota</taxon>
        <taxon>Metazoa</taxon>
        <taxon>Ecdysozoa</taxon>
        <taxon>Arthropoda</taxon>
        <taxon>Chelicerata</taxon>
        <taxon>Arachnida</taxon>
        <taxon>Araneae</taxon>
        <taxon>Araneomorphae</taxon>
        <taxon>Haplogynae</taxon>
        <taxon>Scytodoidea</taxon>
        <taxon>Sicariidae</taxon>
        <taxon>Loxosceles</taxon>
    </lineage>
</organism>
<keyword id="KW-1015">Disulfide bond</keyword>
<keyword id="KW-0245">EGF-like domain</keyword>
<keyword id="KW-0325">Glycoprotein</keyword>
<keyword id="KW-0326">Glycosidase</keyword>
<keyword id="KW-0378">Hydrolase</keyword>
<keyword id="KW-0964">Secreted</keyword>
<keyword id="KW-0732">Signal</keyword>
<sequence>MQTILVLTTFLSAWFLAVGFDVFWNVPSQQCKKYGMKFVPLLEQYSILVNKEDNFKGDKITIFYESQLGLYPHIGANDESFNGGIPQLGDLKAHLEKSAVDIRRDILDKSATGLRIIDWEAWRPIWEFNWSSLRKYQDKMKKVVRQFNPTAHESTVAKLAHNEWENSSKSWMLSTLQLGKQLRPNSVWCYYLFPDCYNYDGNSVQEFQCSEAIRKGNDRLKWLWEESTAVCPSIYIKEGQLTNYTLQKRIWFTNGRLQEALRVAQPKARIYPYINYSIKPGMMVPEVEFWRLIAQIASLGMDGAVIWGSSASVGSKNHCAQLMKYIADVLGPATLRIKENVARCSKQACSGRGRCTWPKDTSVIAWKFLVEKEDYDFYLGDIECKCVEGYEGRYCEQKTK</sequence>
<dbReference type="EC" id="3.2.1.35"/>
<dbReference type="EMBL" id="JX402631">
    <property type="protein sequence ID" value="AGH25912.1"/>
    <property type="molecule type" value="mRNA"/>
</dbReference>
<dbReference type="SMR" id="R4J7Z9"/>
<dbReference type="CAZy" id="GH56">
    <property type="family name" value="Glycoside Hydrolase Family 56"/>
</dbReference>
<dbReference type="ArachnoServer" id="AS001899">
    <property type="toxin name" value="Hyaluronidase-1-Loxosceles intermedia"/>
</dbReference>
<dbReference type="BRENDA" id="3.2.1.35">
    <property type="organism ID" value="8287"/>
</dbReference>
<dbReference type="GO" id="GO:0005576">
    <property type="term" value="C:extracellular region"/>
    <property type="evidence" value="ECO:0007669"/>
    <property type="project" value="UniProtKB-SubCell"/>
</dbReference>
<dbReference type="GO" id="GO:0004415">
    <property type="term" value="F:hyalurononglucosaminidase activity"/>
    <property type="evidence" value="ECO:0007669"/>
    <property type="project" value="UniProtKB-EC"/>
</dbReference>
<dbReference type="GO" id="GO:0005975">
    <property type="term" value="P:carbohydrate metabolic process"/>
    <property type="evidence" value="ECO:0007669"/>
    <property type="project" value="InterPro"/>
</dbReference>
<dbReference type="GO" id="GO:0030214">
    <property type="term" value="P:hyaluronan catabolic process"/>
    <property type="evidence" value="ECO:0007669"/>
    <property type="project" value="TreeGrafter"/>
</dbReference>
<dbReference type="FunFam" id="3.20.20.70:FF:000065">
    <property type="entry name" value="Hyaluronidase"/>
    <property type="match status" value="1"/>
</dbReference>
<dbReference type="Gene3D" id="3.20.20.70">
    <property type="entry name" value="Aldolase class I"/>
    <property type="match status" value="1"/>
</dbReference>
<dbReference type="InterPro" id="IPR013785">
    <property type="entry name" value="Aldolase_TIM"/>
</dbReference>
<dbReference type="InterPro" id="IPR000742">
    <property type="entry name" value="EGF-like_dom"/>
</dbReference>
<dbReference type="InterPro" id="IPR017853">
    <property type="entry name" value="Glycoside_hydrolase_SF"/>
</dbReference>
<dbReference type="InterPro" id="IPR018155">
    <property type="entry name" value="Hyaluronidase"/>
</dbReference>
<dbReference type="PANTHER" id="PTHR11769">
    <property type="entry name" value="HYALURONIDASE"/>
    <property type="match status" value="1"/>
</dbReference>
<dbReference type="PANTHER" id="PTHR11769:SF35">
    <property type="entry name" value="HYALURONIDASE"/>
    <property type="match status" value="1"/>
</dbReference>
<dbReference type="Pfam" id="PF01630">
    <property type="entry name" value="Glyco_hydro_56"/>
    <property type="match status" value="1"/>
</dbReference>
<dbReference type="PIRSF" id="PIRSF038193">
    <property type="entry name" value="Hyaluronidase"/>
    <property type="match status" value="1"/>
</dbReference>
<dbReference type="PRINTS" id="PR00846">
    <property type="entry name" value="GLHYDRLASE56"/>
</dbReference>
<dbReference type="SUPFAM" id="SSF51445">
    <property type="entry name" value="(Trans)glycosidases"/>
    <property type="match status" value="1"/>
</dbReference>
<dbReference type="PROSITE" id="PS00022">
    <property type="entry name" value="EGF_1"/>
    <property type="match status" value="1"/>
</dbReference>
<dbReference type="PROSITE" id="PS01186">
    <property type="entry name" value="EGF_2"/>
    <property type="match status" value="1"/>
</dbReference>
<evidence type="ECO:0000250" key="1"/>
<evidence type="ECO:0000255" key="2"/>
<evidence type="ECO:0000269" key="3">
    <source>
    </source>
</evidence>
<evidence type="ECO:0000269" key="4">
    <source>
    </source>
</evidence>
<evidence type="ECO:0000305" key="5"/>
<comment type="function">
    <text evidence="3 4">Spider venom endo-hyaluronidase that is able to degrade purified hyaluronic acid (HA) and chondroitin sulfate (CS). Has no activity on dermatan sulfate (DS) and heparan sulfate (HS). Also increases the dermonecrotic effect of the dermonecrotic toxin (AC P0CE80), when injected in rabbit skin, supporting the hypothesis that venom hyaluronidases are spreading factors.</text>
</comment>
<comment type="catalytic activity">
    <reaction>
        <text>Random hydrolysis of (1-&gt;4)-linkages between N-acetyl-beta-D-glucosamine and D-glucuronate residues in hyaluronate.</text>
        <dbReference type="EC" id="3.2.1.35"/>
    </reaction>
</comment>
<comment type="subunit">
    <text evidence="1">Monomer.</text>
</comment>
<comment type="subcellular location">
    <subcellularLocation>
        <location evidence="3">Secreted</location>
    </subcellularLocation>
</comment>
<comment type="tissue specificity">
    <text evidence="3">Expressed by the venom gland.</text>
</comment>
<comment type="similarity">
    <text evidence="5">Belongs to the glycosyl hydrolase 56 family.</text>
</comment>